<dbReference type="EMBL" id="U02963">
    <property type="protein sequence ID" value="AAA19956.1"/>
    <property type="molecule type" value="Genomic_DNA"/>
</dbReference>
<dbReference type="PIR" id="T08030">
    <property type="entry name" value="T08030"/>
</dbReference>
<dbReference type="SMR" id="Q39565"/>
<dbReference type="PaxDb" id="3055-EDP01834"/>
<dbReference type="eggNOG" id="KOG3595">
    <property type="taxonomic scope" value="Eukaryota"/>
</dbReference>
<dbReference type="GO" id="GO:0005737">
    <property type="term" value="C:cytoplasm"/>
    <property type="evidence" value="ECO:0007669"/>
    <property type="project" value="UniProtKB-KW"/>
</dbReference>
<dbReference type="GO" id="GO:0030286">
    <property type="term" value="C:dynein complex"/>
    <property type="evidence" value="ECO:0007669"/>
    <property type="project" value="UniProtKB-KW"/>
</dbReference>
<dbReference type="GO" id="GO:0005874">
    <property type="term" value="C:microtubule"/>
    <property type="evidence" value="ECO:0007669"/>
    <property type="project" value="UniProtKB-KW"/>
</dbReference>
<dbReference type="GO" id="GO:0031514">
    <property type="term" value="C:motile cilium"/>
    <property type="evidence" value="ECO:0007669"/>
    <property type="project" value="UniProtKB-SubCell"/>
</dbReference>
<dbReference type="GO" id="GO:0005524">
    <property type="term" value="F:ATP binding"/>
    <property type="evidence" value="ECO:0007669"/>
    <property type="project" value="UniProtKB-KW"/>
</dbReference>
<dbReference type="GO" id="GO:0045505">
    <property type="term" value="F:dynein intermediate chain binding"/>
    <property type="evidence" value="ECO:0007669"/>
    <property type="project" value="InterPro"/>
</dbReference>
<dbReference type="GO" id="GO:0051959">
    <property type="term" value="F:dynein light intermediate chain binding"/>
    <property type="evidence" value="ECO:0007669"/>
    <property type="project" value="InterPro"/>
</dbReference>
<dbReference type="GO" id="GO:0008569">
    <property type="term" value="F:minus-end-directed microtubule motor activity"/>
    <property type="evidence" value="ECO:0007669"/>
    <property type="project" value="InterPro"/>
</dbReference>
<dbReference type="GO" id="GO:0030030">
    <property type="term" value="P:cell projection organization"/>
    <property type="evidence" value="ECO:0007669"/>
    <property type="project" value="UniProtKB-KW"/>
</dbReference>
<dbReference type="GO" id="GO:0007018">
    <property type="term" value="P:microtubule-based movement"/>
    <property type="evidence" value="ECO:0007669"/>
    <property type="project" value="InterPro"/>
</dbReference>
<dbReference type="FunFam" id="1.20.1270.280:FF:000003">
    <property type="entry name" value="Dynein axonemal heavy chain 17"/>
    <property type="match status" value="1"/>
</dbReference>
<dbReference type="FunFam" id="1.20.920.30:FF:000003">
    <property type="entry name" value="Dynein axonemal heavy chain 17"/>
    <property type="match status" value="1"/>
</dbReference>
<dbReference type="FunFam" id="1.10.8.710:FF:000003">
    <property type="entry name" value="Dynein axonemal heavy chain 5"/>
    <property type="match status" value="1"/>
</dbReference>
<dbReference type="FunFam" id="3.20.180.20:FF:000001">
    <property type="entry name" value="Dynein axonemal heavy chain 5"/>
    <property type="match status" value="1"/>
</dbReference>
<dbReference type="FunFam" id="3.40.50.300:FF:002141">
    <property type="entry name" value="Dynein heavy chain"/>
    <property type="match status" value="1"/>
</dbReference>
<dbReference type="FunFam" id="1.20.140.100:FF:000001">
    <property type="entry name" value="dynein heavy chain 17, axonemal"/>
    <property type="match status" value="1"/>
</dbReference>
<dbReference type="FunFam" id="1.10.287.2620:FF:000002">
    <property type="entry name" value="Dynein heavy chain 2, axonemal"/>
    <property type="match status" value="1"/>
</dbReference>
<dbReference type="FunFam" id="1.20.58.1120:FF:000001">
    <property type="entry name" value="dynein heavy chain 2, axonemal"/>
    <property type="match status" value="1"/>
</dbReference>
<dbReference type="FunFam" id="1.20.920.20:FF:000001">
    <property type="entry name" value="dynein heavy chain 2, axonemal"/>
    <property type="match status" value="1"/>
</dbReference>
<dbReference type="FunFam" id="3.10.490.20:FF:000009">
    <property type="entry name" value="Dynein heavy chain 4"/>
    <property type="match status" value="1"/>
</dbReference>
<dbReference type="FunFam" id="3.40.50.300:FF:000063">
    <property type="entry name" value="dynein heavy chain 6, axonemal"/>
    <property type="match status" value="1"/>
</dbReference>
<dbReference type="FunFam" id="1.10.8.720:FF:000002">
    <property type="entry name" value="Dynein heavy chain 9, axonemal"/>
    <property type="match status" value="1"/>
</dbReference>
<dbReference type="FunFam" id="3.40.50.300:FF:000049">
    <property type="entry name" value="Dynein, axonemal, heavy chain 5"/>
    <property type="match status" value="1"/>
</dbReference>
<dbReference type="Gene3D" id="1.10.287.2620">
    <property type="match status" value="1"/>
</dbReference>
<dbReference type="Gene3D" id="1.10.472.130">
    <property type="match status" value="1"/>
</dbReference>
<dbReference type="Gene3D" id="1.10.8.1220">
    <property type="match status" value="1"/>
</dbReference>
<dbReference type="Gene3D" id="1.10.8.710">
    <property type="match status" value="1"/>
</dbReference>
<dbReference type="Gene3D" id="1.20.1270.280">
    <property type="match status" value="1"/>
</dbReference>
<dbReference type="Gene3D" id="1.20.58.1120">
    <property type="match status" value="1"/>
</dbReference>
<dbReference type="Gene3D" id="1.20.920.20">
    <property type="match status" value="1"/>
</dbReference>
<dbReference type="Gene3D" id="1.20.920.30">
    <property type="match status" value="1"/>
</dbReference>
<dbReference type="Gene3D" id="3.10.490.20">
    <property type="match status" value="1"/>
</dbReference>
<dbReference type="Gene3D" id="6.10.140.1060">
    <property type="match status" value="1"/>
</dbReference>
<dbReference type="Gene3D" id="1.20.140.100">
    <property type="entry name" value="Dynein heavy chain, N-terminal domain 2"/>
    <property type="match status" value="1"/>
</dbReference>
<dbReference type="Gene3D" id="3.20.180.20">
    <property type="entry name" value="Dynein heavy chain, N-terminal domain 2"/>
    <property type="match status" value="1"/>
</dbReference>
<dbReference type="Gene3D" id="3.40.50.300">
    <property type="entry name" value="P-loop containing nucleotide triphosphate hydrolases"/>
    <property type="match status" value="5"/>
</dbReference>
<dbReference type="Gene3D" id="1.10.8.720">
    <property type="entry name" value="Region D6 of dynein motor"/>
    <property type="match status" value="1"/>
</dbReference>
<dbReference type="InterPro" id="IPR035699">
    <property type="entry name" value="AAA_6"/>
</dbReference>
<dbReference type="InterPro" id="IPR035706">
    <property type="entry name" value="AAA_9"/>
</dbReference>
<dbReference type="InterPro" id="IPR041658">
    <property type="entry name" value="AAA_lid_11"/>
</dbReference>
<dbReference type="InterPro" id="IPR042219">
    <property type="entry name" value="AAA_lid_11_sf"/>
</dbReference>
<dbReference type="InterPro" id="IPR026983">
    <property type="entry name" value="DHC"/>
</dbReference>
<dbReference type="InterPro" id="IPR041589">
    <property type="entry name" value="DNAH3_AAA_lid_1"/>
</dbReference>
<dbReference type="InterPro" id="IPR042222">
    <property type="entry name" value="Dynein_2_N"/>
</dbReference>
<dbReference type="InterPro" id="IPR043157">
    <property type="entry name" value="Dynein_AAA1S"/>
</dbReference>
<dbReference type="InterPro" id="IPR041466">
    <property type="entry name" value="Dynein_AAA5_ext"/>
</dbReference>
<dbReference type="InterPro" id="IPR041228">
    <property type="entry name" value="Dynein_C"/>
</dbReference>
<dbReference type="InterPro" id="IPR043160">
    <property type="entry name" value="Dynein_C_barrel"/>
</dbReference>
<dbReference type="InterPro" id="IPR024743">
    <property type="entry name" value="Dynein_HC_stalk"/>
</dbReference>
<dbReference type="InterPro" id="IPR024317">
    <property type="entry name" value="Dynein_heavy_chain_D4_dom"/>
</dbReference>
<dbReference type="InterPro" id="IPR004273">
    <property type="entry name" value="Dynein_heavy_D6_P-loop"/>
</dbReference>
<dbReference type="InterPro" id="IPR013602">
    <property type="entry name" value="Dynein_heavy_linker"/>
</dbReference>
<dbReference type="InterPro" id="IPR013594">
    <property type="entry name" value="Dynein_heavy_tail"/>
</dbReference>
<dbReference type="InterPro" id="IPR042228">
    <property type="entry name" value="Dynein_linker_3"/>
</dbReference>
<dbReference type="InterPro" id="IPR027417">
    <property type="entry name" value="P-loop_NTPase"/>
</dbReference>
<dbReference type="PANTHER" id="PTHR45703">
    <property type="entry name" value="DYNEIN HEAVY CHAIN"/>
    <property type="match status" value="1"/>
</dbReference>
<dbReference type="PANTHER" id="PTHR45703:SF8">
    <property type="entry name" value="DYNEINS HEAVY CHAIN"/>
    <property type="match status" value="1"/>
</dbReference>
<dbReference type="Pfam" id="PF12774">
    <property type="entry name" value="AAA_6"/>
    <property type="match status" value="1"/>
</dbReference>
<dbReference type="Pfam" id="PF12775">
    <property type="entry name" value="AAA_7"/>
    <property type="match status" value="1"/>
</dbReference>
<dbReference type="Pfam" id="PF12780">
    <property type="entry name" value="AAA_8"/>
    <property type="match status" value="1"/>
</dbReference>
<dbReference type="Pfam" id="PF12781">
    <property type="entry name" value="AAA_9"/>
    <property type="match status" value="1"/>
</dbReference>
<dbReference type="Pfam" id="PF17857">
    <property type="entry name" value="AAA_lid_1"/>
    <property type="match status" value="1"/>
</dbReference>
<dbReference type="Pfam" id="PF18198">
    <property type="entry name" value="AAA_lid_11"/>
    <property type="match status" value="1"/>
</dbReference>
<dbReference type="Pfam" id="PF08385">
    <property type="entry name" value="DHC_N1"/>
    <property type="match status" value="1"/>
</dbReference>
<dbReference type="Pfam" id="PF08393">
    <property type="entry name" value="DHC_N2"/>
    <property type="match status" value="1"/>
</dbReference>
<dbReference type="Pfam" id="PF17852">
    <property type="entry name" value="Dynein_AAA_lid"/>
    <property type="match status" value="1"/>
</dbReference>
<dbReference type="Pfam" id="PF18199">
    <property type="entry name" value="Dynein_C"/>
    <property type="match status" value="1"/>
</dbReference>
<dbReference type="Pfam" id="PF03028">
    <property type="entry name" value="Dynein_heavy"/>
    <property type="match status" value="1"/>
</dbReference>
<dbReference type="Pfam" id="PF12777">
    <property type="entry name" value="MT"/>
    <property type="match status" value="1"/>
</dbReference>
<dbReference type="SUPFAM" id="SSF52540">
    <property type="entry name" value="P-loop containing nucleoside triphosphate hydrolases"/>
    <property type="match status" value="4"/>
</dbReference>
<accession>Q39565</accession>
<feature type="chain" id="PRO_0000114649" description="Dynein beta chain, flagellar outer arm">
    <location>
        <begin position="1"/>
        <end position="4568"/>
    </location>
</feature>
<feature type="region of interest" description="Stem" evidence="1">
    <location>
        <begin position="1"/>
        <end position="1880"/>
    </location>
</feature>
<feature type="region of interest" description="Disordered" evidence="3">
    <location>
        <begin position="1144"/>
        <end position="1166"/>
    </location>
</feature>
<feature type="region of interest" description="AAA 1" evidence="1">
    <location>
        <begin position="1881"/>
        <end position="2102"/>
    </location>
</feature>
<feature type="region of interest" description="AAA 2" evidence="1">
    <location>
        <begin position="2164"/>
        <end position="2385"/>
    </location>
</feature>
<feature type="region of interest" description="AAA 3" evidence="1">
    <location>
        <begin position="2493"/>
        <end position="2738"/>
    </location>
</feature>
<feature type="region of interest" description="AAA 4" evidence="1">
    <location>
        <begin position="2841"/>
        <end position="3090"/>
    </location>
</feature>
<feature type="region of interest" description="Stalk" evidence="1">
    <location>
        <begin position="3106"/>
        <end position="3425"/>
    </location>
</feature>
<feature type="region of interest" description="AAA 5" evidence="1">
    <location>
        <begin position="3481"/>
        <end position="3711"/>
    </location>
</feature>
<feature type="region of interest" description="AAA 6" evidence="1">
    <location>
        <begin position="3937"/>
        <end position="4172"/>
    </location>
</feature>
<feature type="coiled-coil region" evidence="2">
    <location>
        <begin position="277"/>
        <end position="293"/>
    </location>
</feature>
<feature type="coiled-coil region" evidence="2">
    <location>
        <begin position="1158"/>
        <end position="1175"/>
    </location>
</feature>
<feature type="coiled-coil region" evidence="2">
    <location>
        <begin position="1372"/>
        <end position="1400"/>
    </location>
</feature>
<feature type="coiled-coil region" evidence="2">
    <location>
        <begin position="1614"/>
        <end position="1650"/>
    </location>
</feature>
<feature type="coiled-coil region" evidence="2">
    <location>
        <begin position="1778"/>
        <end position="1825"/>
    </location>
</feature>
<feature type="coiled-coil region" evidence="2">
    <location>
        <begin position="2831"/>
        <end position="2848"/>
    </location>
</feature>
<feature type="coiled-coil region" evidence="2">
    <location>
        <begin position="3106"/>
        <end position="3162"/>
    </location>
</feature>
<feature type="coiled-coil region" evidence="2">
    <location>
        <begin position="3339"/>
        <end position="3425"/>
    </location>
</feature>
<feature type="coiled-coil region" evidence="2">
    <location>
        <begin position="3648"/>
        <end position="3728"/>
    </location>
</feature>
<feature type="compositionally biased region" description="Basic and acidic residues" evidence="3">
    <location>
        <begin position="1150"/>
        <end position="1166"/>
    </location>
</feature>
<feature type="binding site" evidence="2">
    <location>
        <begin position="1919"/>
        <end position="1926"/>
    </location>
    <ligand>
        <name>ATP</name>
        <dbReference type="ChEBI" id="CHEBI:30616"/>
    </ligand>
</feature>
<feature type="binding site" evidence="2">
    <location>
        <begin position="2202"/>
        <end position="2209"/>
    </location>
    <ligand>
        <name>ATP</name>
        <dbReference type="ChEBI" id="CHEBI:30616"/>
    </ligand>
</feature>
<feature type="binding site" evidence="2">
    <location>
        <begin position="2530"/>
        <end position="2537"/>
    </location>
    <ligand>
        <name>ATP</name>
        <dbReference type="ChEBI" id="CHEBI:30616"/>
    </ligand>
</feature>
<feature type="binding site" evidence="2">
    <location>
        <begin position="2879"/>
        <end position="2886"/>
    </location>
    <ligand>
        <name>ATP</name>
        <dbReference type="ChEBI" id="CHEBI:30616"/>
    </ligand>
</feature>
<keyword id="KW-0067">ATP-binding</keyword>
<keyword id="KW-0966">Cell projection</keyword>
<keyword id="KW-0969">Cilium</keyword>
<keyword id="KW-0970">Cilium biogenesis/degradation</keyword>
<keyword id="KW-0175">Coiled coil</keyword>
<keyword id="KW-0963">Cytoplasm</keyword>
<keyword id="KW-0206">Cytoskeleton</keyword>
<keyword id="KW-0243">Dynein</keyword>
<keyword id="KW-0282">Flagellum</keyword>
<keyword id="KW-0493">Microtubule</keyword>
<keyword id="KW-0505">Motor protein</keyword>
<keyword id="KW-0547">Nucleotide-binding</keyword>
<keyword id="KW-0677">Repeat</keyword>
<reference key="1">
    <citation type="journal article" date="1994" name="J. Cell Sci.">
        <title>Sequence analysis of the Chlamydomonas alpha and beta dynein heavy chain genes.</title>
        <authorList>
            <person name="Mitchell D.R."/>
            <person name="Brown K.S."/>
        </authorList>
    </citation>
    <scope>NUCLEOTIDE SEQUENCE [GENOMIC DNA]</scope>
    <source>
        <strain>21gr / CC-1690</strain>
    </source>
</reference>
<proteinExistence type="inferred from homology"/>
<gene>
    <name type="primary">ODA4</name>
    <name type="synonym">ODA-4</name>
    <name type="synonym">SUP1</name>
</gene>
<sequence>MAEDEGMTAAAPSSSVKDIRFDYIRDRVCSCLKVPDSAYDKLVSGDGRTSLVQFMEEAHTKRLLIMLDGKDLSATVKPPPKFKKKTVYFLKLQETKLDNDNIKKLVIHGEISENPLETLAAISQDVFMPVLTAPANQQGWPDVVAKEVTENLHKFVSNVFVTIGQMKGQTLLPLPPQNTVPTLQPEQSMHSLKDQDKIHILESAIVTWTKQIKNVLKADPDAPLKEPGAYPGPLTELNFWSERAANLNSIHEQLTSEKTQKVVKVLELAKSTYYPAFQRLFREVEAAQQEANDNVKFLKPLRKYLDKLNMMDDFPMLVDLFKPIMHTLMLIWKHSKSYNSSTRFVTLMQEICNDLIMQACKYVPGSDLIQMEPSEAVDKLRMTLRWLGTFKNYYFEYRALSMQDTPENPWKFQNNSLFARLDSFLERCHDMMDLMSTCMQFNRLERVEIGGTKGKVLTNGVKAIHQDFTSAVEKFQQVTYDVMDVDAKQFDEDFFGFRVVIKELERRLAAIIIQAFDDCTTIGTTFKLLDSFEGLLDREVIAHDLEKKHTDLLHSYARDLKDVADLFHQYKDRPIVAKNSAPYSGAAYWVRGLMERIKDPMDRLLTMNKMVLESELFREIQRTYDHLWEEMTEYRTRAVDAWCAQVAATSDEKLNLPLLSLIEETADGIRVLGVNFDPALVRLLRETKYFLLLETSTQDKNADRNAEKAAEGGEVEVVKKAPKLSVPDSAKDLFASADTFRQQISALDLICSIYNKVQRTILAVEKPLVQQKLDAVEQALNRGLAELNWKCAEIDTYIKECMELVKDVDLVLNTIKDNVKATQGILAMWEKNLMFERKDGKTYTFDELNDAFNQLIQQRHSEIRDAGKEITKLLSSSNRVLKVSKGAASWRAYVDYFSNIVIDGFSAAIISTVRYLLSQIDPDILAKTESSPLLEIQVELVAPDIVWKPDLGEGGAKPGLRDMIKKWLQSFLEIGQLMKRLDVGEGNYAKELEEDFEVYDALNQVMMVTLANESRCEDFKNQFAKFDYLWKQDLQATLQQFITDNGVTLPDGTRDDPPLAKFEEQIVKYKNVASEIASFKDTMTMGYVKVNAKPLRQALSTWASKWVYLFTHYLQEKVVNSITELYTFMDTSNSTLDLKVMGEGVEEEPEYHPDQDPEEAAAKKAAEEEEKRKALYAIMACMRDIRRRTERGTDTMFEPLKETVTALHTFGIQLSDTVLHQLDNAEFNWRTLKKKMLNRREQLAPLQQAEAVEIRRKSDAFNERVEDFRTFFQRKAPFAVSGGELKLEQVKPAYKLLDEFRSGSLEGYPSVLGIIAESKQLQEAQDLFELYQPGYLQLQRCSEELGHLKSLWDTVGTVMFTFRDWYKTPWDKIDVDFLVEETKKLSKDIKMLNKAVRNYDVYRMLEEAIKAVLTSLPLVQDLHHPAMRERHWKLLMQTTGKHFVMDDKFCLGDLLALELHNYVDACSEIVDRAQKELNIEKQLKKIEDTWAGLSLAFSTYQDSDVMALLVDDAVNEALEADNLQLQNLSGQKYVQSNPMFLETVSKWQNNMGRVSAVLETWQNVQKKWQNLESIFIGSADIRVQLPEDSKRFDAVNADFQELMRTAPDITNVVEACTLDGRQERLENMQSMLEQCEKALQEYLETKRVAFPRFYFVSPADLLDILSKGSNPQLILRHLQKCFDNIDNLSFRKDERGDPTKIATHMHSKEGEVVEFVEDCSCDGPVEVWLQNVVDSMKLALQVEFRKAIPTYDELPRTKWIYVYSAQNTVVVSRTFFTQEINEAFDDLEEGNEEALKVELDRQVQQLADLIDEINKEQTSLDRKKLITLCTIDVHSRDLVQKLIDERVEDQMCFQWQSQLRYIQSEKTKTCQVNICDAEIAYSYEYIGNCGCLCITPLTDRCFITLTQAQRLVLGGAPAGPAGTGKTETTKDLARALGIQCYVFNCSDQMDYKAMGHTYKGLAQTGAWGCFDEFNRIPVAVLSVCSTQYKTVLDAIRAKKERFTFEDADISLKSTVMAFITMNPGYPGRAELPESLKALFRPVSMVVPDLALICEIMLMAEGFQMSKILSRKFVILYKLCEDLLSKSRHYDWKLRAIKTTLYVAGGMKRAAPELSEDKVLLRALRDFNLGKLTADDTSIFMGLLNDLFPKTLELVPRALDKAFDEAAHKAATELGYQPDDQFLLKISHVRELFVVRWSVFLLGAAGCGKTAVWRTLLRAQNSSGEKTIYQAVNPKAVTRNELYGYLHPATREWKEGLMSVTFRNMANNKTNKHQWIVLDGDIDAEWIESMNTVMDDNKMLTLASNERIPLTPSMRLLLEINHMVHCSPATVSRGGVIFINADDVGWQPVVASWIDKLEAAEYRPLLTALFTKYVDPCLEHCRRNFKTVVPLPAVNQAMTICKILEGILPKETVRGAPPPDKKLLHYHFVFACVWAFGGCMLVDKVTDYRTQFSKWWVSEWKDVQFPEKGLVYDYYVDEQNCIMVPWEDRVTKFQYIPGDFTSLFVPTVETTRLTYFLDSLVSNKHYAMFVGNTGTGKSAIMVNKLRNMDTETMSFYTINMNSLSEAPALQVILEQPLEKKSGVRYGPPGSRRMVYFVDDMNMPLVDKYDTQSSIELLRQMVDYHGWYDKVKIQLKEIINCQMAACMNPTAGSFNITPRMQRHFVTFAVQMPNAEITRAMYYQIIDGHFSSFDVDVAKMSNKLVDATCELHRNVMHNFLPSAVKFHYQFNLRDLSNITQGLTRAIKEYYREPVKVARLWVHECERVFRDRMINEADMAKFDEFRVAVTKKFFDDCGGMVAIEERPLIYASHASMTYTPEDVPVYNALSSYDVLRKTLEDKLREYNESNAVMDLVLFQQAMEHVTRIARIIDLPRGNAMLVGVGGSGKQSLARLASYICGYEVYQISVSSTYGINDFKENLLGLYRKAGTKGTPITFLMTDNQIVKEGFLVYINDLLSTGYIADLFTPEDKEAFTNAVRNEVKAAGILDSAENCWDFFIDKVRKFLHIVLCFSPVGDKFRIRARQFPALVNCTMFDWFHGWPGEALVSVAQRFLVDVPNMEEVVRENIAYHMAYAHQCVSEASERFKEAFRRYNYTTPKSYLELISLYKMLLQLKRDDLRRSKERLENGIDKIAQAAAQVTDLQRVLKEEQIVVDEKKAQTDELIVSIGKEKAIVDQAVEAGREDEEAATALQTEVSAFQAECERDLLEAEPIIAQAEAALNSLNKKELSELKSFGSPAAEIVQVAAACLVLTCGGKIPKDRDWNAGKKMMADVNSFLSSLMNFDKDNVPVVCVEVVEKDYISNPGFTPDNIKGKSAACAGLCSWVINICKYFRIYQVVAPKRAALAEANKKLDTANKKLKVIRDEVKRLQDRVALLEQSLMKATEDKNAAIAQADRTARKAQMAERLINGLSGENTRWGAEIKRLESLEGRLVGDVLIASAFVSYAGPFNMQFRKSLVDEKWLPDIIERQIPMTQGIRPLDLLTDDATKAKWANEGLPTDPLSVENGAIMSNASRWALMIDPQLQGIKWIINKETNNGLVIIQQSQPKYIDQVINCIENGWPLLIENLPVDIDAVLDPVIGKMTIKKGRNIIMKIGDAEVQYDSRFRLYLQTKLSNPHFKPEVAAQTTLVNFCVTEKGLEDQLLALVVDHERPDLQEQAAGLVRSLNEYNITLVELENNLLFNLANATGNILENIELIEGLEETKRTAVEIEEKVKLAKQTEIQIAKAREVYRPVATRGSLTYFLIDNLNALDRVYHYSMANFVFVLKKGMDMTPGGKDESKVPLAERLNQEVDLDKRVELLVETTCFVLIGYVAQGLFERHKLIVATQLCMQILRSRGELHYAKFEYLLRGPKVMGADNPLHDWVSDSVWGSVQALKELDDYQGLPEDLIGSSKRWREWMELERPEDEPLPGDWKRMQEFDKLLLFRALRPDRLTSAMGRFVTNMLGAKYVTSQPYDLERSYQDASPGTPIFVFLSPGVDVAGSVEALGKKLGFTLDNGKYASVSLGQGQEPIAMDRLSAAHKNGGWVLLQNIHLTIDWTTNQLDKKVDKLVEGAHPDFRLFLSAEPPPSLERGLPISLLQNSIKLTNEPARGLKANLRRAWNNFNEEILESCAKQAEFRAIVFALCYFHAALLERKKFGVGNLPGARSGIGWNMNYPFNTGDLLCCGQTANNYLENNVKVPWEDLRYNFGEIMYGGHIVEDYDRRLAMCYLRKYVNEGLLDNMEFFPGFAMPPNTANHRQVLEFIDEVMPPETPLAFGLHPNAEIGFKLREAESFCNSLVQLQPRESSGEGGMSAEERAKLVLDEVVDKLPDIFDMEDVRSKINPDDPNMPFVMVAIQESERMNMLLAEMKRSLLELDLGLKGDLTMTEPMERLLKALATDAVPGSWRNLAYPSLRPLGSWLGNLLARHAQLVDWTAELSTPKAVWLSGLFNPQSFLTAVMQATARRNDWPLDKTVIITEVTKKQPDQIEANSRDGAFIHGLTLEGARWDDKIGALDDSKPKELFCPMPVILVRAVTQDKAEMKDVYKCPVYTTEARFREEVFEAQLKSKHTEIKWVLAGVCLFLDVV</sequence>
<comment type="function">
    <text>Force generating protein of eukaryotic cilia and flagella. Produces force towards the minus ends of microtubules. Dynein has ATPase activity; the force-producing power stroke is thought to occur on release of ADP.</text>
</comment>
<comment type="subunit">
    <text>Consists of at least 3 heavy chains (alpha, beta and gamma), 2 intermediate chains and 8 light chains.</text>
</comment>
<comment type="subcellular location">
    <subcellularLocation>
        <location>Cell projection</location>
        <location>Cilium</location>
        <location>Flagellum</location>
    </subcellularLocation>
    <subcellularLocation>
        <location>Cytoplasm</location>
        <location>Cytoskeleton</location>
        <location>Flagellum axoneme</location>
    </subcellularLocation>
</comment>
<comment type="domain">
    <text>Dynein heavy chains probably consist of an N-terminal stem (which binds cargo and interacts with other dynein components), and the head or motor domain. The motor contains six tandemly-linked AAA domains in the head, which form a ring. A stalk-like structure (formed by two of the coiled coil domains) protrudes between AAA 4 and AAA 5 and terminates in a microtubule-binding site. A seventh domain may also contribute to this ring; it is not clear whether the N-terminus or the C-terminus forms this extra domain. There are four well-conserved and two non-conserved ATPase sites, one per AAA domain. Probably only one of these (within AAA 1) actually hydrolyzes ATP, the others may serve a regulatory function.</text>
</comment>
<comment type="similarity">
    <text evidence="4">Belongs to the dynein heavy chain family.</text>
</comment>
<evidence type="ECO:0000250" key="1"/>
<evidence type="ECO:0000255" key="2"/>
<evidence type="ECO:0000256" key="3">
    <source>
        <dbReference type="SAM" id="MobiDB-lite"/>
    </source>
</evidence>
<evidence type="ECO:0000305" key="4"/>
<name>DYHB_CHLRE</name>
<organism>
    <name type="scientific">Chlamydomonas reinhardtii</name>
    <name type="common">Chlamydomonas smithii</name>
    <dbReference type="NCBI Taxonomy" id="3055"/>
    <lineage>
        <taxon>Eukaryota</taxon>
        <taxon>Viridiplantae</taxon>
        <taxon>Chlorophyta</taxon>
        <taxon>core chlorophytes</taxon>
        <taxon>Chlorophyceae</taxon>
        <taxon>CS clade</taxon>
        <taxon>Chlamydomonadales</taxon>
        <taxon>Chlamydomonadaceae</taxon>
        <taxon>Chlamydomonas</taxon>
    </lineage>
</organism>
<protein>
    <recommendedName>
        <fullName>Dynein beta chain, flagellar outer arm</fullName>
    </recommendedName>
</protein>